<comment type="function">
    <text evidence="1">Catalyzes the attachment of serine to tRNA(Ser). Is also able to aminoacylate tRNA(Sec) with serine, to form the misacylated tRNA L-seryl-tRNA(Sec), which will be further converted into selenocysteinyl-tRNA(Sec).</text>
</comment>
<comment type="catalytic activity">
    <reaction evidence="1">
        <text>tRNA(Ser) + L-serine + ATP = L-seryl-tRNA(Ser) + AMP + diphosphate + H(+)</text>
        <dbReference type="Rhea" id="RHEA:12292"/>
        <dbReference type="Rhea" id="RHEA-COMP:9669"/>
        <dbReference type="Rhea" id="RHEA-COMP:9703"/>
        <dbReference type="ChEBI" id="CHEBI:15378"/>
        <dbReference type="ChEBI" id="CHEBI:30616"/>
        <dbReference type="ChEBI" id="CHEBI:33019"/>
        <dbReference type="ChEBI" id="CHEBI:33384"/>
        <dbReference type="ChEBI" id="CHEBI:78442"/>
        <dbReference type="ChEBI" id="CHEBI:78533"/>
        <dbReference type="ChEBI" id="CHEBI:456215"/>
        <dbReference type="EC" id="6.1.1.11"/>
    </reaction>
</comment>
<comment type="catalytic activity">
    <reaction evidence="1">
        <text>tRNA(Sec) + L-serine + ATP = L-seryl-tRNA(Sec) + AMP + diphosphate + H(+)</text>
        <dbReference type="Rhea" id="RHEA:42580"/>
        <dbReference type="Rhea" id="RHEA-COMP:9742"/>
        <dbReference type="Rhea" id="RHEA-COMP:10128"/>
        <dbReference type="ChEBI" id="CHEBI:15378"/>
        <dbReference type="ChEBI" id="CHEBI:30616"/>
        <dbReference type="ChEBI" id="CHEBI:33019"/>
        <dbReference type="ChEBI" id="CHEBI:33384"/>
        <dbReference type="ChEBI" id="CHEBI:78442"/>
        <dbReference type="ChEBI" id="CHEBI:78533"/>
        <dbReference type="ChEBI" id="CHEBI:456215"/>
        <dbReference type="EC" id="6.1.1.11"/>
    </reaction>
</comment>
<comment type="pathway">
    <text evidence="1">Aminoacyl-tRNA biosynthesis; selenocysteinyl-tRNA(Sec) biosynthesis; L-seryl-tRNA(Sec) from L-serine and tRNA(Sec): step 1/1.</text>
</comment>
<comment type="subunit">
    <text evidence="1">Homodimer. The tRNA molecule binds across the dimer.</text>
</comment>
<comment type="subcellular location">
    <subcellularLocation>
        <location evidence="1">Cytoplasm</location>
    </subcellularLocation>
</comment>
<comment type="domain">
    <text evidence="1">Consists of two distinct domains, a catalytic core and a N-terminal extension that is involved in tRNA binding.</text>
</comment>
<comment type="similarity">
    <text evidence="1">Belongs to the class-II aminoacyl-tRNA synthetase family. Type-1 seryl-tRNA synthetase subfamily.</text>
</comment>
<dbReference type="EC" id="6.1.1.11" evidence="1"/>
<dbReference type="EMBL" id="CP001095">
    <property type="protein sequence ID" value="ACJ53239.1"/>
    <property type="molecule type" value="Genomic_DNA"/>
</dbReference>
<dbReference type="EMBL" id="AP010889">
    <property type="protein sequence ID" value="BAJ69832.1"/>
    <property type="molecule type" value="Genomic_DNA"/>
</dbReference>
<dbReference type="RefSeq" id="WP_012578440.1">
    <property type="nucleotide sequence ID" value="NC_011593.1"/>
</dbReference>
<dbReference type="SMR" id="B7GN83"/>
<dbReference type="KEGG" id="bln:Blon_2178"/>
<dbReference type="KEGG" id="blon:BLIJ_2255"/>
<dbReference type="PATRIC" id="fig|391904.8.peg.2255"/>
<dbReference type="HOGENOM" id="CLU_023797_0_1_11"/>
<dbReference type="UniPathway" id="UPA00906">
    <property type="reaction ID" value="UER00895"/>
</dbReference>
<dbReference type="Proteomes" id="UP000001360">
    <property type="component" value="Chromosome"/>
</dbReference>
<dbReference type="GO" id="GO:0005737">
    <property type="term" value="C:cytoplasm"/>
    <property type="evidence" value="ECO:0007669"/>
    <property type="project" value="UniProtKB-SubCell"/>
</dbReference>
<dbReference type="GO" id="GO:0005524">
    <property type="term" value="F:ATP binding"/>
    <property type="evidence" value="ECO:0007669"/>
    <property type="project" value="UniProtKB-UniRule"/>
</dbReference>
<dbReference type="GO" id="GO:0004828">
    <property type="term" value="F:serine-tRNA ligase activity"/>
    <property type="evidence" value="ECO:0007669"/>
    <property type="project" value="UniProtKB-UniRule"/>
</dbReference>
<dbReference type="GO" id="GO:0016260">
    <property type="term" value="P:selenocysteine biosynthetic process"/>
    <property type="evidence" value="ECO:0007669"/>
    <property type="project" value="UniProtKB-UniRule"/>
</dbReference>
<dbReference type="GO" id="GO:0006434">
    <property type="term" value="P:seryl-tRNA aminoacylation"/>
    <property type="evidence" value="ECO:0007669"/>
    <property type="project" value="UniProtKB-UniRule"/>
</dbReference>
<dbReference type="Gene3D" id="3.30.930.10">
    <property type="entry name" value="Bira Bifunctional Protein, Domain 2"/>
    <property type="match status" value="1"/>
</dbReference>
<dbReference type="Gene3D" id="1.10.287.40">
    <property type="entry name" value="Serine-tRNA synthetase, tRNA binding domain"/>
    <property type="match status" value="1"/>
</dbReference>
<dbReference type="HAMAP" id="MF_00176">
    <property type="entry name" value="Ser_tRNA_synth_type1"/>
    <property type="match status" value="1"/>
</dbReference>
<dbReference type="InterPro" id="IPR002314">
    <property type="entry name" value="aa-tRNA-synt_IIb"/>
</dbReference>
<dbReference type="InterPro" id="IPR006195">
    <property type="entry name" value="aa-tRNA-synth_II"/>
</dbReference>
<dbReference type="InterPro" id="IPR045864">
    <property type="entry name" value="aa-tRNA-synth_II/BPL/LPL"/>
</dbReference>
<dbReference type="InterPro" id="IPR002317">
    <property type="entry name" value="Ser-tRNA-ligase_type_1"/>
</dbReference>
<dbReference type="InterPro" id="IPR015866">
    <property type="entry name" value="Ser-tRNA-synth_1_N"/>
</dbReference>
<dbReference type="InterPro" id="IPR042103">
    <property type="entry name" value="SerRS_1_N_sf"/>
</dbReference>
<dbReference type="InterPro" id="IPR010978">
    <property type="entry name" value="tRNA-bd_arm"/>
</dbReference>
<dbReference type="NCBIfam" id="TIGR00414">
    <property type="entry name" value="serS"/>
    <property type="match status" value="1"/>
</dbReference>
<dbReference type="PANTHER" id="PTHR11778">
    <property type="entry name" value="SERYL-TRNA SYNTHETASE"/>
    <property type="match status" value="1"/>
</dbReference>
<dbReference type="Pfam" id="PF02403">
    <property type="entry name" value="Seryl_tRNA_N"/>
    <property type="match status" value="1"/>
</dbReference>
<dbReference type="Pfam" id="PF00587">
    <property type="entry name" value="tRNA-synt_2b"/>
    <property type="match status" value="1"/>
</dbReference>
<dbReference type="PIRSF" id="PIRSF001529">
    <property type="entry name" value="Ser-tRNA-synth_IIa"/>
    <property type="match status" value="1"/>
</dbReference>
<dbReference type="PRINTS" id="PR00981">
    <property type="entry name" value="TRNASYNTHSER"/>
</dbReference>
<dbReference type="SUPFAM" id="SSF55681">
    <property type="entry name" value="Class II aaRS and biotin synthetases"/>
    <property type="match status" value="1"/>
</dbReference>
<dbReference type="SUPFAM" id="SSF46589">
    <property type="entry name" value="tRNA-binding arm"/>
    <property type="match status" value="1"/>
</dbReference>
<dbReference type="PROSITE" id="PS50862">
    <property type="entry name" value="AA_TRNA_LIGASE_II"/>
    <property type="match status" value="1"/>
</dbReference>
<evidence type="ECO:0000255" key="1">
    <source>
        <dbReference type="HAMAP-Rule" id="MF_00176"/>
    </source>
</evidence>
<protein>
    <recommendedName>
        <fullName evidence="1">Serine--tRNA ligase</fullName>
        <ecNumber evidence="1">6.1.1.11</ecNumber>
    </recommendedName>
    <alternativeName>
        <fullName evidence="1">Seryl-tRNA synthetase</fullName>
        <shortName evidence="1">SerRS</shortName>
    </alternativeName>
    <alternativeName>
        <fullName evidence="1">Seryl-tRNA(Ser/Sec) synthetase</fullName>
    </alternativeName>
</protein>
<feature type="chain" id="PRO_1000123872" description="Serine--tRNA ligase">
    <location>
        <begin position="1"/>
        <end position="428"/>
    </location>
</feature>
<feature type="binding site" evidence="1">
    <location>
        <begin position="231"/>
        <end position="233"/>
    </location>
    <ligand>
        <name>L-serine</name>
        <dbReference type="ChEBI" id="CHEBI:33384"/>
    </ligand>
</feature>
<feature type="binding site" evidence="1">
    <location>
        <begin position="262"/>
        <end position="264"/>
    </location>
    <ligand>
        <name>ATP</name>
        <dbReference type="ChEBI" id="CHEBI:30616"/>
    </ligand>
</feature>
<feature type="binding site" evidence="1">
    <location>
        <position position="278"/>
    </location>
    <ligand>
        <name>ATP</name>
        <dbReference type="ChEBI" id="CHEBI:30616"/>
    </ligand>
</feature>
<feature type="binding site" evidence="1">
    <location>
        <position position="285"/>
    </location>
    <ligand>
        <name>L-serine</name>
        <dbReference type="ChEBI" id="CHEBI:33384"/>
    </ligand>
</feature>
<feature type="binding site" evidence="1">
    <location>
        <begin position="349"/>
        <end position="352"/>
    </location>
    <ligand>
        <name>ATP</name>
        <dbReference type="ChEBI" id="CHEBI:30616"/>
    </ligand>
</feature>
<feature type="binding site" evidence="1">
    <location>
        <position position="384"/>
    </location>
    <ligand>
        <name>L-serine</name>
        <dbReference type="ChEBI" id="CHEBI:33384"/>
    </ligand>
</feature>
<accession>B7GN83</accession>
<accession>E8MN29</accession>
<organism>
    <name type="scientific">Bifidobacterium longum subsp. infantis (strain ATCC 15697 / DSM 20088 / JCM 1222 / NCTC 11817 / S12)</name>
    <dbReference type="NCBI Taxonomy" id="391904"/>
    <lineage>
        <taxon>Bacteria</taxon>
        <taxon>Bacillati</taxon>
        <taxon>Actinomycetota</taxon>
        <taxon>Actinomycetes</taxon>
        <taxon>Bifidobacteriales</taxon>
        <taxon>Bifidobacteriaceae</taxon>
        <taxon>Bifidobacterium</taxon>
    </lineage>
</organism>
<gene>
    <name evidence="1" type="primary">serS</name>
    <name type="ordered locus">Blon_2178</name>
    <name type="ordered locus">BLIJ_2255</name>
</gene>
<sequence>MLDIQFIREHTDIVKESQRKRGESVELVDEVLSSDTARREALKAFEEARAQQKEIGKKVASVPADEKAKLIAETKELSQTVAEYKAKADSAAEEYTTAMWRLSNIVEPEAPEGGEDDYVVVKKVGQIRDFAAEGFEPKDHLTLGAGVAGIDMRRGVKVGGSRFYFLRGQVARMQIAMLTMAVDQAEEHGFTLAITPTLVRPEVMRGTGFLNSHADEIYRLREPDDQYLVGTSEVALAGMHENEILDLGNGPLRYCGWSSCYRREAGAAGKDTSGIIRVHQFDKVEMFVYAKQEDSYKEHEHLLAMEQEMLAKVEVPYRIIDTAAGDLGSSAARKFDCEAWVPTQGRYRELTSTSNCTEYQARRLNIRERMEDGGTRPVSTLNGTLATTRWLVAIMENHQQKDGSIEIPKAMRAYMGGKEVIEPTKWEA</sequence>
<name>SYS_BIFLS</name>
<reference key="1">
    <citation type="journal article" date="2008" name="Proc. Natl. Acad. Sci. U.S.A.">
        <title>The genome sequence of Bifidobacterium longum subsp. infantis reveals adaptations for milk utilization within the infant microbiome.</title>
        <authorList>
            <person name="Sela D.A."/>
            <person name="Chapman J."/>
            <person name="Adeuya A."/>
            <person name="Kim J.H."/>
            <person name="Chen F."/>
            <person name="Whitehead T.R."/>
            <person name="Lapidus A."/>
            <person name="Rokhsar D.S."/>
            <person name="Lebrilla C.B."/>
            <person name="German J.B."/>
            <person name="Price N.P."/>
            <person name="Richardson P.M."/>
            <person name="Mills D.A."/>
        </authorList>
    </citation>
    <scope>NUCLEOTIDE SEQUENCE [LARGE SCALE GENOMIC DNA]</scope>
    <source>
        <strain>ATCC 15697 / DSM 20088 / JCM 1222 / NCTC 11817 / S12</strain>
    </source>
</reference>
<reference key="2">
    <citation type="journal article" date="2011" name="Nature">
        <title>Bifidobacteria can protect from enteropathogenic infection through production of acetate.</title>
        <authorList>
            <person name="Fukuda S."/>
            <person name="Toh H."/>
            <person name="Hase K."/>
            <person name="Oshima K."/>
            <person name="Nakanishi Y."/>
            <person name="Yoshimura K."/>
            <person name="Tobe T."/>
            <person name="Clarke J.M."/>
            <person name="Topping D.L."/>
            <person name="Suzuki T."/>
            <person name="Taylor T.D."/>
            <person name="Itoh K."/>
            <person name="Kikuchi J."/>
            <person name="Morita H."/>
            <person name="Hattori M."/>
            <person name="Ohno H."/>
        </authorList>
    </citation>
    <scope>NUCLEOTIDE SEQUENCE [LARGE SCALE GENOMIC DNA]</scope>
    <source>
        <strain>ATCC 15697 / DSM 20088 / JCM 1222 / NCTC 11817 / S12</strain>
    </source>
</reference>
<proteinExistence type="inferred from homology"/>
<keyword id="KW-0030">Aminoacyl-tRNA synthetase</keyword>
<keyword id="KW-0067">ATP-binding</keyword>
<keyword id="KW-0963">Cytoplasm</keyword>
<keyword id="KW-0436">Ligase</keyword>
<keyword id="KW-0547">Nucleotide-binding</keyword>
<keyword id="KW-0648">Protein biosynthesis</keyword>